<evidence type="ECO:0000305" key="1"/>
<dbReference type="EC" id="2.4.1.16"/>
<dbReference type="EMBL" id="M82948">
    <property type="protein sequence ID" value="AAA33381.1"/>
    <property type="molecule type" value="Genomic_DNA"/>
</dbReference>
<dbReference type="PIR" id="H45189">
    <property type="entry name" value="H45189"/>
</dbReference>
<dbReference type="SMR" id="P30577"/>
<dbReference type="CAZy" id="GT2">
    <property type="family name" value="Glycosyltransferase Family 2"/>
</dbReference>
<dbReference type="GO" id="GO:0030428">
    <property type="term" value="C:cell septum"/>
    <property type="evidence" value="ECO:0007669"/>
    <property type="project" value="TreeGrafter"/>
</dbReference>
<dbReference type="GO" id="GO:0005886">
    <property type="term" value="C:plasma membrane"/>
    <property type="evidence" value="ECO:0007669"/>
    <property type="project" value="UniProtKB-SubCell"/>
</dbReference>
<dbReference type="GO" id="GO:0004100">
    <property type="term" value="F:chitin synthase activity"/>
    <property type="evidence" value="ECO:0007669"/>
    <property type="project" value="UniProtKB-EC"/>
</dbReference>
<dbReference type="GO" id="GO:0071555">
    <property type="term" value="P:cell wall organization"/>
    <property type="evidence" value="ECO:0007669"/>
    <property type="project" value="UniProtKB-KW"/>
</dbReference>
<dbReference type="GO" id="GO:0006031">
    <property type="term" value="P:chitin biosynthetic process"/>
    <property type="evidence" value="ECO:0007669"/>
    <property type="project" value="InterPro"/>
</dbReference>
<dbReference type="InterPro" id="IPR004835">
    <property type="entry name" value="Chitin_synth"/>
</dbReference>
<dbReference type="InterPro" id="IPR004834">
    <property type="entry name" value="Chitin_synth_fun"/>
</dbReference>
<dbReference type="PANTHER" id="PTHR22914">
    <property type="entry name" value="CHITIN SYNTHASE"/>
    <property type="match status" value="1"/>
</dbReference>
<dbReference type="PANTHER" id="PTHR22914:SF39">
    <property type="entry name" value="CHITIN SYNTHASE"/>
    <property type="match status" value="1"/>
</dbReference>
<dbReference type="Pfam" id="PF01644">
    <property type="entry name" value="Chitin_synth_1"/>
    <property type="match status" value="1"/>
</dbReference>
<name>CHS2_AJECA</name>
<reference key="1">
    <citation type="journal article" date="1992" name="Proc. Natl. Acad. Sci. U.S.A.">
        <title>Classification of fungal chitin synthases.</title>
        <authorList>
            <person name="Bowen A.R."/>
            <person name="Chen-Wu J.L.-P."/>
            <person name="Momany M."/>
            <person name="Young R."/>
            <person name="Szaniszlo P.J."/>
            <person name="Robbins P.W."/>
        </authorList>
    </citation>
    <scope>NUCLEOTIDE SEQUENCE [GENOMIC DNA]</scope>
</reference>
<organism>
    <name type="scientific">Ajellomyces capsulatus</name>
    <name type="common">Darling's disease fungus</name>
    <name type="synonym">Histoplasma capsulatum</name>
    <dbReference type="NCBI Taxonomy" id="5037"/>
    <lineage>
        <taxon>Eukaryota</taxon>
        <taxon>Fungi</taxon>
        <taxon>Dikarya</taxon>
        <taxon>Ascomycota</taxon>
        <taxon>Pezizomycotina</taxon>
        <taxon>Eurotiomycetes</taxon>
        <taxon>Eurotiomycetidae</taxon>
        <taxon>Onygenales</taxon>
        <taxon>Ajellomycetaceae</taxon>
        <taxon>Histoplasma</taxon>
    </lineage>
</organism>
<protein>
    <recommendedName>
        <fullName>Chitin synthase 2</fullName>
        <ecNumber>2.4.1.16</ecNumber>
    </recommendedName>
    <alternativeName>
        <fullName>Chitin-UDP acetyl-glucosaminyl transferase 2</fullName>
    </alternativeName>
    <alternativeName>
        <fullName>Class-III chitin synthase 2</fullName>
    </alternativeName>
</protein>
<feature type="chain" id="PRO_0000193675" description="Chitin synthase 2">
    <location>
        <begin position="1" status="less than"/>
        <end position="194" status="greater than"/>
    </location>
</feature>
<feature type="non-terminal residue">
    <location>
        <position position="1"/>
    </location>
</feature>
<feature type="non-terminal residue">
    <location>
        <position position="194"/>
    </location>
</feature>
<proteinExistence type="inferred from homology"/>
<gene>
    <name type="primary">CHS2</name>
</gene>
<comment type="function">
    <text evidence="1">Polymerizes chitin, a structural polymer of the cell wall and septum, by transferring the sugar moiety of UDP-GlcNAc to the non-reducing end of the growing chitin polymer.</text>
</comment>
<comment type="catalytic activity">
    <reaction>
        <text>[(1-&gt;4)-N-acetyl-beta-D-glucosaminyl](n) + UDP-N-acetyl-alpha-D-glucosamine = [(1-&gt;4)-N-acetyl-beta-D-glucosaminyl](n+1) + UDP + H(+)</text>
        <dbReference type="Rhea" id="RHEA:16637"/>
        <dbReference type="Rhea" id="RHEA-COMP:9593"/>
        <dbReference type="Rhea" id="RHEA-COMP:9595"/>
        <dbReference type="ChEBI" id="CHEBI:15378"/>
        <dbReference type="ChEBI" id="CHEBI:17029"/>
        <dbReference type="ChEBI" id="CHEBI:57705"/>
        <dbReference type="ChEBI" id="CHEBI:58223"/>
        <dbReference type="EC" id="2.4.1.16"/>
    </reaction>
</comment>
<comment type="subcellular location">
    <subcellularLocation>
        <location evidence="1">Cell membrane</location>
        <topology evidence="1">Multi-pass membrane protein</topology>
    </subcellularLocation>
</comment>
<comment type="similarity">
    <text evidence="1">Belongs to the chitin synthase family. Class III subfamily.</text>
</comment>
<sequence>KMLTSRTLHGVMQNIRDIVNLKKSEFWNKGGPAWQKIAVCLVFDGIDPCDKDTLDVLATIGIYQDGVMKKDVDGKETIAHIFEYTTQLSVTANQQLIRPHDDGPSTLPPVQMMFCLKQKNSKKINSHRWLFNAFGRILNPEICILLDAGTKPGHKSLLALWEAFYNDKDLGGSCGEIHAMLGKGWKNLINPLVA</sequence>
<accession>P30577</accession>
<keyword id="KW-1003">Cell membrane</keyword>
<keyword id="KW-0961">Cell wall biogenesis/degradation</keyword>
<keyword id="KW-0328">Glycosyltransferase</keyword>
<keyword id="KW-0472">Membrane</keyword>
<keyword id="KW-0808">Transferase</keyword>
<keyword id="KW-0812">Transmembrane</keyword>